<comment type="function">
    <text evidence="1">DNA-dependent RNA polymerase catalyzes the transcription of DNA into RNA using the four ribonucleoside triphosphates as substrates.</text>
</comment>
<comment type="catalytic activity">
    <reaction evidence="1">
        <text>RNA(n) + a ribonucleoside 5'-triphosphate = RNA(n+1) + diphosphate</text>
        <dbReference type="Rhea" id="RHEA:21248"/>
        <dbReference type="Rhea" id="RHEA-COMP:14527"/>
        <dbReference type="Rhea" id="RHEA-COMP:17342"/>
        <dbReference type="ChEBI" id="CHEBI:33019"/>
        <dbReference type="ChEBI" id="CHEBI:61557"/>
        <dbReference type="ChEBI" id="CHEBI:140395"/>
        <dbReference type="EC" id="2.7.7.6"/>
    </reaction>
</comment>
<comment type="cofactor">
    <cofactor evidence="1">
        <name>Mg(2+)</name>
        <dbReference type="ChEBI" id="CHEBI:18420"/>
    </cofactor>
    <text evidence="1">Binds 1 Mg(2+) ion per subunit.</text>
</comment>
<comment type="cofactor">
    <cofactor evidence="1">
        <name>Zn(2+)</name>
        <dbReference type="ChEBI" id="CHEBI:29105"/>
    </cofactor>
    <text evidence="1">Binds 1 Zn(2+) ion per subunit.</text>
</comment>
<comment type="subunit">
    <text evidence="1">In plastids the minimal PEP RNA polymerase catalytic core is composed of four subunits: alpha, beta, beta', and beta''. When a (nuclear-encoded) sigma factor is associated with the core the holoenzyme is formed, which can initiate transcription.</text>
</comment>
<comment type="subcellular location">
    <subcellularLocation>
        <location evidence="1">Plastid</location>
        <location evidence="1">Chloroplast</location>
    </subcellularLocation>
</comment>
<comment type="similarity">
    <text evidence="1">Belongs to the RNA polymerase beta' chain family. RpoC1 subfamily.</text>
</comment>
<organism>
    <name type="scientific">Phaeodactylum tricornutum (strain CCAP 1055/1)</name>
    <dbReference type="NCBI Taxonomy" id="556484"/>
    <lineage>
        <taxon>Eukaryota</taxon>
        <taxon>Sar</taxon>
        <taxon>Stramenopiles</taxon>
        <taxon>Ochrophyta</taxon>
        <taxon>Bacillariophyta</taxon>
        <taxon>Bacillariophyceae</taxon>
        <taxon>Bacillariophycidae</taxon>
        <taxon>Naviculales</taxon>
        <taxon>Phaeodactylaceae</taxon>
        <taxon>Phaeodactylum</taxon>
    </lineage>
</organism>
<geneLocation type="chloroplast"/>
<proteinExistence type="inferred from homology"/>
<keyword id="KW-0150">Chloroplast</keyword>
<keyword id="KW-0240">DNA-directed RNA polymerase</keyword>
<keyword id="KW-0460">Magnesium</keyword>
<keyword id="KW-0479">Metal-binding</keyword>
<keyword id="KW-0548">Nucleotidyltransferase</keyword>
<keyword id="KW-0934">Plastid</keyword>
<keyword id="KW-1185">Reference proteome</keyword>
<keyword id="KW-0804">Transcription</keyword>
<keyword id="KW-0808">Transferase</keyword>
<keyword id="KW-0862">Zinc</keyword>
<evidence type="ECO:0000255" key="1">
    <source>
        <dbReference type="HAMAP-Rule" id="MF_01323"/>
    </source>
</evidence>
<dbReference type="EC" id="2.7.7.6" evidence="1"/>
<dbReference type="EMBL" id="EF067920">
    <property type="protein sequence ID" value="ABK20636.1"/>
    <property type="molecule type" value="Genomic_DNA"/>
</dbReference>
<dbReference type="RefSeq" id="YP_874413.1">
    <property type="nucleotide sequence ID" value="NC_008588.1"/>
</dbReference>
<dbReference type="SMR" id="A0T0D8"/>
<dbReference type="FunCoup" id="A0T0D8">
    <property type="interactions" value="1"/>
</dbReference>
<dbReference type="STRING" id="556484.A0T0D8"/>
<dbReference type="GeneID" id="4524588"/>
<dbReference type="InParanoid" id="A0T0D8"/>
<dbReference type="Proteomes" id="UP000000759">
    <property type="component" value="Chloroplast"/>
</dbReference>
<dbReference type="GO" id="GO:0009507">
    <property type="term" value="C:chloroplast"/>
    <property type="evidence" value="ECO:0007669"/>
    <property type="project" value="UniProtKB-SubCell"/>
</dbReference>
<dbReference type="GO" id="GO:0000428">
    <property type="term" value="C:DNA-directed RNA polymerase complex"/>
    <property type="evidence" value="ECO:0007669"/>
    <property type="project" value="UniProtKB-KW"/>
</dbReference>
<dbReference type="GO" id="GO:0005739">
    <property type="term" value="C:mitochondrion"/>
    <property type="evidence" value="ECO:0007669"/>
    <property type="project" value="GOC"/>
</dbReference>
<dbReference type="GO" id="GO:0003677">
    <property type="term" value="F:DNA binding"/>
    <property type="evidence" value="ECO:0007669"/>
    <property type="project" value="UniProtKB-UniRule"/>
</dbReference>
<dbReference type="GO" id="GO:0003899">
    <property type="term" value="F:DNA-directed RNA polymerase activity"/>
    <property type="evidence" value="ECO:0007669"/>
    <property type="project" value="UniProtKB-UniRule"/>
</dbReference>
<dbReference type="GO" id="GO:0000287">
    <property type="term" value="F:magnesium ion binding"/>
    <property type="evidence" value="ECO:0007669"/>
    <property type="project" value="UniProtKB-UniRule"/>
</dbReference>
<dbReference type="GO" id="GO:0008270">
    <property type="term" value="F:zinc ion binding"/>
    <property type="evidence" value="ECO:0007669"/>
    <property type="project" value="UniProtKB-UniRule"/>
</dbReference>
<dbReference type="GO" id="GO:0006351">
    <property type="term" value="P:DNA-templated transcription"/>
    <property type="evidence" value="ECO:0007669"/>
    <property type="project" value="UniProtKB-UniRule"/>
</dbReference>
<dbReference type="Gene3D" id="1.10.40.90">
    <property type="match status" value="1"/>
</dbReference>
<dbReference type="Gene3D" id="2.40.40.20">
    <property type="match status" value="1"/>
</dbReference>
<dbReference type="Gene3D" id="4.10.860.120">
    <property type="entry name" value="RNA polymerase II, clamp domain"/>
    <property type="match status" value="1"/>
</dbReference>
<dbReference type="Gene3D" id="1.10.274.100">
    <property type="entry name" value="RNA polymerase Rpb1, domain 3"/>
    <property type="match status" value="1"/>
</dbReference>
<dbReference type="HAMAP" id="MF_01323">
    <property type="entry name" value="RNApol_bact_RpoC1"/>
    <property type="match status" value="1"/>
</dbReference>
<dbReference type="InterPro" id="IPR045867">
    <property type="entry name" value="DNA-dir_RpoC_beta_prime"/>
</dbReference>
<dbReference type="InterPro" id="IPR000722">
    <property type="entry name" value="RNA_pol_asu"/>
</dbReference>
<dbReference type="InterPro" id="IPR006592">
    <property type="entry name" value="RNA_pol_N"/>
</dbReference>
<dbReference type="InterPro" id="IPR007080">
    <property type="entry name" value="RNA_pol_Rpb1_1"/>
</dbReference>
<dbReference type="InterPro" id="IPR007066">
    <property type="entry name" value="RNA_pol_Rpb1_3"/>
</dbReference>
<dbReference type="InterPro" id="IPR042102">
    <property type="entry name" value="RNA_pol_Rpb1_3_sf"/>
</dbReference>
<dbReference type="InterPro" id="IPR044893">
    <property type="entry name" value="RNA_pol_Rpb1_clamp_domain"/>
</dbReference>
<dbReference type="InterPro" id="IPR034678">
    <property type="entry name" value="RNApol_RpoC1"/>
</dbReference>
<dbReference type="PANTHER" id="PTHR19376">
    <property type="entry name" value="DNA-DIRECTED RNA POLYMERASE"/>
    <property type="match status" value="1"/>
</dbReference>
<dbReference type="PANTHER" id="PTHR19376:SF54">
    <property type="entry name" value="DNA-DIRECTED RNA POLYMERASE SUBUNIT BETA"/>
    <property type="match status" value="1"/>
</dbReference>
<dbReference type="Pfam" id="PF04997">
    <property type="entry name" value="RNA_pol_Rpb1_1"/>
    <property type="match status" value="1"/>
</dbReference>
<dbReference type="Pfam" id="PF00623">
    <property type="entry name" value="RNA_pol_Rpb1_2"/>
    <property type="match status" value="2"/>
</dbReference>
<dbReference type="Pfam" id="PF04983">
    <property type="entry name" value="RNA_pol_Rpb1_3"/>
    <property type="match status" value="1"/>
</dbReference>
<dbReference type="SMART" id="SM00663">
    <property type="entry name" value="RPOLA_N"/>
    <property type="match status" value="1"/>
</dbReference>
<dbReference type="SUPFAM" id="SSF64484">
    <property type="entry name" value="beta and beta-prime subunits of DNA dependent RNA-polymerase"/>
    <property type="match status" value="1"/>
</dbReference>
<feature type="chain" id="PRO_0000277182" description="DNA-directed RNA polymerase subunit beta'">
    <location>
        <begin position="1"/>
        <end position="696"/>
    </location>
</feature>
<feature type="binding site" evidence="1">
    <location>
        <position position="70"/>
    </location>
    <ligand>
        <name>Zn(2+)</name>
        <dbReference type="ChEBI" id="CHEBI:29105"/>
    </ligand>
</feature>
<feature type="binding site" evidence="1">
    <location>
        <position position="72"/>
    </location>
    <ligand>
        <name>Zn(2+)</name>
        <dbReference type="ChEBI" id="CHEBI:29105"/>
    </ligand>
</feature>
<feature type="binding site" evidence="1">
    <location>
        <position position="85"/>
    </location>
    <ligand>
        <name>Zn(2+)</name>
        <dbReference type="ChEBI" id="CHEBI:29105"/>
    </ligand>
</feature>
<feature type="binding site" evidence="1">
    <location>
        <position position="88"/>
    </location>
    <ligand>
        <name>Zn(2+)</name>
        <dbReference type="ChEBI" id="CHEBI:29105"/>
    </ligand>
</feature>
<feature type="binding site" evidence="1">
    <location>
        <position position="540"/>
    </location>
    <ligand>
        <name>Mg(2+)</name>
        <dbReference type="ChEBI" id="CHEBI:18420"/>
    </ligand>
</feature>
<feature type="binding site" evidence="1">
    <location>
        <position position="542"/>
    </location>
    <ligand>
        <name>Mg(2+)</name>
        <dbReference type="ChEBI" id="CHEBI:18420"/>
    </ligand>
</feature>
<feature type="binding site" evidence="1">
    <location>
        <position position="544"/>
    </location>
    <ligand>
        <name>Mg(2+)</name>
        <dbReference type="ChEBI" id="CHEBI:18420"/>
    </ligand>
</feature>
<sequence length="696" mass="80750">MVESTKEFDYIKIKLASPFRILQWANRKLPNGQFVGEVQKSETINYRTFKPEMDGLFCERIFGPSKSLECACGKYKRVRYEGLICERCGVELTESRVRRHRMGYINLIYPVTHVWYINSRPNFMALLLEVEEFEKKLDTTYTTHSENCKKCDGLKLTTSTVVDLWDERVKRIKLASLAYFIAEDEISFYGIHWDLQQYRRSRELGYTGYPLKPYPKPQNRRYSTPKYLLRATPNFLIGAPLIKRELEKLNLKSEIFRMRYFILVCTKVLNKEKPIYDESRWFRKWEQQRIYKIREQAIKRIRILENLVGTGSSPAWMILTILPVIPPALRPMIQLEGGRFATSDLNELYRRIITRNNRLLRLLEIDAPQLIIRNEKRLLQEAVDTLIDNGKRGKIALSANNRPLKSLSDIIKGKHGRFRQNLLGKRVDYSGRSVIVVGPSLRLNQCGLPYEMAIELFQPFIIRELINQGLASNMKIAKNLIQQNESIIDPVLEKVLKSHPIFLNRAPTLHRLGIQAFEPILVQGRAIKLHPLVCSAFNADFDGDQMAVHIPLSLEAQAECYMLMLAPYNFLSPANGEPIIMPSQDMVLGCYYLTVNNINGLLGSSHYFANLADVILAYSQSKLEIHSAIWIRLEEQEINESILLKTTILDDETKIEFYENLQIRKTKDNQLIVQYVQTTTGRAILNYIIQKTLNFL</sequence>
<protein>
    <recommendedName>
        <fullName evidence="1">DNA-directed RNA polymerase subunit beta'</fullName>
        <ecNumber evidence="1">2.7.7.6</ecNumber>
    </recommendedName>
    <alternativeName>
        <fullName evidence="1">PEP</fullName>
    </alternativeName>
    <alternativeName>
        <fullName evidence="1">Plastid-encoded RNA polymerase subunit beta'</fullName>
        <shortName evidence="1">RNA polymerase subunit beta'</shortName>
    </alternativeName>
</protein>
<name>RPOC1_PHATC</name>
<accession>A0T0D8</accession>
<gene>
    <name evidence="1" type="primary">rpoC1</name>
</gene>
<reference key="1">
    <citation type="journal article" date="2007" name="Mol. Genet. Genomics">
        <title>Chloroplast genomes of the diatoms Phaeodactylum tricornutum and Thalassiosira pseudonana: comparison with other plastid genomes of the red lineage.</title>
        <authorList>
            <person name="Oudot-Le Secq M.-P."/>
            <person name="Grimwood J."/>
            <person name="Shapiro H."/>
            <person name="Armbrust E.V."/>
            <person name="Bowler C."/>
            <person name="Green B.R."/>
        </authorList>
    </citation>
    <scope>NUCLEOTIDE SEQUENCE [LARGE SCALE GENOMIC DNA]</scope>
    <source>
        <strain>CCAP 1055/1</strain>
    </source>
</reference>